<sequence length="152" mass="17235">MAAFIAKQMVGDQLKSVKAMGGDEGEKEGNENAEEEAAAIEEARREAEERRKEKHRKMEEEREEMRQTIRDKYGLKKKVKEEPEAEADLDEGRVGRKKKTKEELAAEANEEEDDDEFAKFPTDLSDLTTKVSELPQKMAASVGEVTEKCSLQ</sequence>
<gene>
    <name type="primary">cpx</name>
</gene>
<proteinExistence type="evidence at protein level"/>
<feature type="chain" id="PRO_0000240241" description="Complexin">
    <location>
        <begin position="1"/>
        <end position="149"/>
    </location>
</feature>
<feature type="propeptide" id="PRO_0000240242" description="Removed in mature form" evidence="1">
    <location>
        <begin position="150"/>
        <end position="152"/>
    </location>
</feature>
<feature type="region of interest" description="Disordered" evidence="2">
    <location>
        <begin position="1"/>
        <end position="119"/>
    </location>
</feature>
<feature type="region of interest" description="Interaction with the SNARE complex">
    <location>
        <begin position="59"/>
        <end position="75"/>
    </location>
</feature>
<feature type="compositionally biased region" description="Acidic residues" evidence="2">
    <location>
        <begin position="23"/>
        <end position="39"/>
    </location>
</feature>
<feature type="compositionally biased region" description="Basic and acidic residues" evidence="2">
    <location>
        <begin position="41"/>
        <end position="82"/>
    </location>
</feature>
<feature type="compositionally biased region" description="Basic and acidic residues" evidence="2">
    <location>
        <begin position="90"/>
        <end position="104"/>
    </location>
</feature>
<feature type="modified residue" description="Cysteine methyl ester" evidence="1">
    <location>
        <position position="149"/>
    </location>
</feature>
<feature type="lipid moiety-binding region" description="S-farnesyl cysteine" evidence="1">
    <location>
        <position position="149"/>
    </location>
</feature>
<feature type="helix" evidence="6">
    <location>
        <begin position="50"/>
        <end position="73"/>
    </location>
</feature>
<protein>
    <recommendedName>
        <fullName>Complexin</fullName>
    </recommendedName>
    <alternativeName>
        <fullName>Synaphin</fullName>
    </alternativeName>
</protein>
<comment type="function">
    <text evidence="3">Positively regulates a late step in synaptic vesicle exocytosis.</text>
</comment>
<comment type="subunit">
    <text evidence="3 4">Binds to the SNARE core complex containing SNAP25, synaptobrevin and syntaxin-1.</text>
</comment>
<comment type="subcellular location">
    <subcellularLocation>
        <location evidence="5">Membrane</location>
        <topology evidence="5">Lipid-anchor</topology>
    </subcellularLocation>
    <subcellularLocation>
        <location evidence="3">Cytoplasm</location>
        <location evidence="3">Cytosol</location>
    </subcellularLocation>
</comment>
<comment type="similarity">
    <text evidence="5">Belongs to the complexin/synaphin family.</text>
</comment>
<dbReference type="EMBL" id="AB003700">
    <property type="protein sequence ID" value="BAB62069.1"/>
    <property type="molecule type" value="mRNA"/>
</dbReference>
<dbReference type="PDB" id="1L4A">
    <property type="method" value="X-ray"/>
    <property type="resolution" value="2.95 A"/>
    <property type="chains" value="E=25-98"/>
</dbReference>
<dbReference type="PDBsum" id="1L4A"/>
<dbReference type="SMR" id="Q95PA1"/>
<dbReference type="IntAct" id="Q95PA1">
    <property type="interactions" value="3"/>
</dbReference>
<dbReference type="MINT" id="Q95PA1"/>
<dbReference type="GO" id="GO:0005829">
    <property type="term" value="C:cytosol"/>
    <property type="evidence" value="ECO:0007669"/>
    <property type="project" value="UniProtKB-SubCell"/>
</dbReference>
<dbReference type="GO" id="GO:0031201">
    <property type="term" value="C:SNARE complex"/>
    <property type="evidence" value="ECO:0007669"/>
    <property type="project" value="TreeGrafter"/>
</dbReference>
<dbReference type="GO" id="GO:0043195">
    <property type="term" value="C:terminal bouton"/>
    <property type="evidence" value="ECO:0007669"/>
    <property type="project" value="TreeGrafter"/>
</dbReference>
<dbReference type="GO" id="GO:0019905">
    <property type="term" value="F:syntaxin binding"/>
    <property type="evidence" value="ECO:0007669"/>
    <property type="project" value="InterPro"/>
</dbReference>
<dbReference type="GO" id="GO:0046928">
    <property type="term" value="P:regulation of neurotransmitter secretion"/>
    <property type="evidence" value="ECO:0007669"/>
    <property type="project" value="TreeGrafter"/>
</dbReference>
<dbReference type="GO" id="GO:0016079">
    <property type="term" value="P:synaptic vesicle exocytosis"/>
    <property type="evidence" value="ECO:0007669"/>
    <property type="project" value="TreeGrafter"/>
</dbReference>
<dbReference type="Gene3D" id="1.20.5.580">
    <property type="entry name" value="Single Helix bin"/>
    <property type="match status" value="1"/>
</dbReference>
<dbReference type="InterPro" id="IPR008849">
    <property type="entry name" value="Synaphin"/>
</dbReference>
<dbReference type="PANTHER" id="PTHR16705">
    <property type="entry name" value="COMPLEXIN"/>
    <property type="match status" value="1"/>
</dbReference>
<dbReference type="PANTHER" id="PTHR16705:SF4">
    <property type="entry name" value="COMPLEXIN"/>
    <property type="match status" value="1"/>
</dbReference>
<dbReference type="Pfam" id="PF05835">
    <property type="entry name" value="Synaphin"/>
    <property type="match status" value="1"/>
</dbReference>
<dbReference type="SUPFAM" id="SSF58038">
    <property type="entry name" value="SNARE fusion complex"/>
    <property type="match status" value="1"/>
</dbReference>
<evidence type="ECO:0000255" key="1"/>
<evidence type="ECO:0000256" key="2">
    <source>
        <dbReference type="SAM" id="MobiDB-lite"/>
    </source>
</evidence>
<evidence type="ECO:0000269" key="3">
    <source>
    </source>
</evidence>
<evidence type="ECO:0000269" key="4">
    <source>
    </source>
</evidence>
<evidence type="ECO:0000305" key="5"/>
<evidence type="ECO:0007829" key="6">
    <source>
        <dbReference type="PDB" id="1L4A"/>
    </source>
</evidence>
<organism>
    <name type="scientific">Doryteuthis pealeii</name>
    <name type="common">Longfin inshore squid</name>
    <name type="synonym">Loligo pealeii</name>
    <dbReference type="NCBI Taxonomy" id="1051067"/>
    <lineage>
        <taxon>Eukaryota</taxon>
        <taxon>Metazoa</taxon>
        <taxon>Spiralia</taxon>
        <taxon>Lophotrochozoa</taxon>
        <taxon>Mollusca</taxon>
        <taxon>Cephalopoda</taxon>
        <taxon>Coleoidea</taxon>
        <taxon>Decapodiformes</taxon>
        <taxon>Myopsida</taxon>
        <taxon>Loliginidae</taxon>
        <taxon>Doryteuthis</taxon>
    </lineage>
</organism>
<name>CPLX_DORPE</name>
<reference key="1">
    <citation type="journal article" date="2001" name="Cell">
        <title>SNARE complex oligomerization by synaphin/complexin is essential for synaptic vesicle exocytosis.</title>
        <authorList>
            <person name="Tokumaru H."/>
            <person name="Umayahara K."/>
            <person name="Pellegrini L.L."/>
            <person name="Ishizuka T."/>
            <person name="Saisu H."/>
            <person name="Betz H."/>
            <person name="Augustine G.J."/>
            <person name="Abe T."/>
        </authorList>
    </citation>
    <scope>NUCLEOTIDE SEQUENCE [MRNA]</scope>
    <scope>PROTEIN SEQUENCE OF 20-26 AND 90-96</scope>
    <scope>SUBCELLULAR LOCATION</scope>
    <scope>SUBUNIT</scope>
    <scope>FUNCTION</scope>
    <source>
        <tissue>Optic lobe</tissue>
    </source>
</reference>
<reference key="2">
    <citation type="journal article" date="2002" name="J. Biol. Chem.">
        <title>X-ray structure of a neuronal complexin-SNARE complex from squid.</title>
        <authorList>
            <person name="Bracher A."/>
            <person name="Kadlec J."/>
            <person name="Betz H."/>
            <person name="Weissenhorn W."/>
        </authorList>
    </citation>
    <scope>X-RAY CRYSTALLOGRAPHY (2.95 ANGSTROMS) OF 25-98 IN COMPLEX WITH THE SNARE CORE COMPLEX</scope>
</reference>
<keyword id="KW-0002">3D-structure</keyword>
<keyword id="KW-0963">Cytoplasm</keyword>
<keyword id="KW-0903">Direct protein sequencing</keyword>
<keyword id="KW-0268">Exocytosis</keyword>
<keyword id="KW-0449">Lipoprotein</keyword>
<keyword id="KW-0472">Membrane</keyword>
<keyword id="KW-0488">Methylation</keyword>
<keyword id="KW-0532">Neurotransmitter transport</keyword>
<keyword id="KW-0636">Prenylation</keyword>
<keyword id="KW-0813">Transport</keyword>
<accession>Q95PA1</accession>